<sequence>MRLKRMHIRYYPPGIFLDYEKGGQLRTKCIDLLNLTPETDVEELVLEIRAAEPLITSSCVEQVKLLICKLQEKVGQKDERKFYLFRALQAHILPLTNVAFNKSGSCFITGSYDRTCKIWDTASGEELHTLEGHRNVVYAIAFNNPYGDKVATGSFDKTCKLWSAETGKCFYTFRGHTAEIVCLAFNPQSTLVATGSMDTTAKLWDVESGEEVSTLAGHFAEIISLCFNTTGDRLVTGSFDHTAILWDVPSGRKVHVLSGHRGEISCVQFNWDCSLIATASLDKSCKVWDAEGGQCLATLLGHNDEVLDVCFNYTGQLIATASADGTSRVFSTDTFQCLCQLEGHKGEISKVCFNAQGSRVLTASVDKTSRVWCVKTGACLQVLEGHSDEIFSCAFNYEGDTIITGSKDNTCRIWH</sequence>
<name>DAW1_DANRE</name>
<gene>
    <name type="primary">daw1</name>
    <name type="synonym">oda16</name>
    <name type="synonym">wdr69</name>
    <name type="ORF">si:dkey-223n17.5</name>
    <name type="ORF">zgc:153626</name>
</gene>
<protein>
    <recommendedName>
        <fullName>Dynein assembly factor with WD repeat domains 1</fullName>
    </recommendedName>
    <alternativeName>
        <fullName>Outer row dynein assembly protein 16 homolog</fullName>
    </alternativeName>
    <alternativeName>
        <fullName>WD repeat-containing protein 69</fullName>
    </alternativeName>
</protein>
<dbReference type="EMBL" id="BX908751">
    <property type="protein sequence ID" value="CAK05479.1"/>
    <property type="status" value="ALT_SEQ"/>
    <property type="molecule type" value="Genomic_DNA"/>
</dbReference>
<dbReference type="EMBL" id="BC124403">
    <property type="protein sequence ID" value="AAI24404.1"/>
    <property type="molecule type" value="mRNA"/>
</dbReference>
<dbReference type="EMBL" id="BC124455">
    <property type="protein sequence ID" value="AAI24456.1"/>
    <property type="molecule type" value="mRNA"/>
</dbReference>
<dbReference type="SMR" id="Q1LV15"/>
<dbReference type="STRING" id="7955.ENSDARP00000116595"/>
<dbReference type="PaxDb" id="7955-ENSDARP00000116595"/>
<dbReference type="AGR" id="ZFIN:ZDB-GENE-050419-255"/>
<dbReference type="ZFIN" id="ZDB-GENE-050419-255">
    <property type="gene designation" value="daw1"/>
</dbReference>
<dbReference type="eggNOG" id="KOG0272">
    <property type="taxonomic scope" value="Eukaryota"/>
</dbReference>
<dbReference type="InParanoid" id="Q1LV15"/>
<dbReference type="PhylomeDB" id="Q1LV15"/>
<dbReference type="TreeFam" id="TF323481"/>
<dbReference type="PRO" id="PR:Q1LV15"/>
<dbReference type="Proteomes" id="UP000000437">
    <property type="component" value="Unplaced"/>
</dbReference>
<dbReference type="GO" id="GO:0036064">
    <property type="term" value="C:ciliary basal body"/>
    <property type="evidence" value="ECO:0000250"/>
    <property type="project" value="UniProtKB"/>
</dbReference>
<dbReference type="GO" id="GO:0005929">
    <property type="term" value="C:cilium"/>
    <property type="evidence" value="ECO:0000250"/>
    <property type="project" value="UniProtKB"/>
</dbReference>
<dbReference type="GO" id="GO:0005737">
    <property type="term" value="C:cytoplasm"/>
    <property type="evidence" value="ECO:0007669"/>
    <property type="project" value="UniProtKB-KW"/>
</dbReference>
<dbReference type="GO" id="GO:0031514">
    <property type="term" value="C:motile cilium"/>
    <property type="evidence" value="ECO:0007669"/>
    <property type="project" value="UniProtKB-KW"/>
</dbReference>
<dbReference type="GO" id="GO:0019005">
    <property type="term" value="C:SCF ubiquitin ligase complex"/>
    <property type="evidence" value="ECO:0000318"/>
    <property type="project" value="GO_Central"/>
</dbReference>
<dbReference type="GO" id="GO:1990756">
    <property type="term" value="F:ubiquitin-like ligase-substrate adaptor activity"/>
    <property type="evidence" value="ECO:0000318"/>
    <property type="project" value="GO_Central"/>
</dbReference>
<dbReference type="GO" id="GO:0070286">
    <property type="term" value="P:axonemal dynein complex assembly"/>
    <property type="evidence" value="ECO:0000315"/>
    <property type="project" value="UniProtKB"/>
</dbReference>
<dbReference type="GO" id="GO:0060271">
    <property type="term" value="P:cilium assembly"/>
    <property type="evidence" value="ECO:0000315"/>
    <property type="project" value="UniProtKB"/>
</dbReference>
<dbReference type="GO" id="GO:0060285">
    <property type="term" value="P:cilium-dependent cell motility"/>
    <property type="evidence" value="ECO:0000315"/>
    <property type="project" value="UniProtKB"/>
</dbReference>
<dbReference type="GO" id="GO:0061371">
    <property type="term" value="P:determination of heart left/right asymmetry"/>
    <property type="evidence" value="ECO:0000315"/>
    <property type="project" value="ZFIN"/>
</dbReference>
<dbReference type="GO" id="GO:0007368">
    <property type="term" value="P:determination of left/right symmetry"/>
    <property type="evidence" value="ECO:0000315"/>
    <property type="project" value="UniProtKB"/>
</dbReference>
<dbReference type="GO" id="GO:0042073">
    <property type="term" value="P:intraciliary transport"/>
    <property type="evidence" value="ECO:0000250"/>
    <property type="project" value="UniProtKB"/>
</dbReference>
<dbReference type="GO" id="GO:0032474">
    <property type="term" value="P:otolith morphogenesis"/>
    <property type="evidence" value="ECO:0000315"/>
    <property type="project" value="ZFIN"/>
</dbReference>
<dbReference type="GO" id="GO:0036158">
    <property type="term" value="P:outer dynein arm assembly"/>
    <property type="evidence" value="ECO:0000250"/>
    <property type="project" value="UniProtKB"/>
</dbReference>
<dbReference type="GO" id="GO:0000209">
    <property type="term" value="P:protein polyubiquitination"/>
    <property type="evidence" value="ECO:0000318"/>
    <property type="project" value="GO_Central"/>
</dbReference>
<dbReference type="GO" id="GO:0003352">
    <property type="term" value="P:regulation of cilium movement"/>
    <property type="evidence" value="ECO:0000315"/>
    <property type="project" value="ZFIN"/>
</dbReference>
<dbReference type="CDD" id="cd00200">
    <property type="entry name" value="WD40"/>
    <property type="match status" value="1"/>
</dbReference>
<dbReference type="FunFam" id="2.130.10.10:FF:000227">
    <property type="entry name" value="Dynein assembly factor with WDR repeat domains 1"/>
    <property type="match status" value="1"/>
</dbReference>
<dbReference type="FunFam" id="2.130.10.10:FF:000250">
    <property type="entry name" value="Dynein assembly factor with WDR repeat domains 1"/>
    <property type="match status" value="2"/>
</dbReference>
<dbReference type="Gene3D" id="2.130.10.10">
    <property type="entry name" value="YVTN repeat-like/Quinoprotein amine dehydrogenase"/>
    <property type="match status" value="4"/>
</dbReference>
<dbReference type="InterPro" id="IPR020472">
    <property type="entry name" value="G-protein_beta_WD-40_rep"/>
</dbReference>
<dbReference type="InterPro" id="IPR015943">
    <property type="entry name" value="WD40/YVTN_repeat-like_dom_sf"/>
</dbReference>
<dbReference type="InterPro" id="IPR019775">
    <property type="entry name" value="WD40_repeat_CS"/>
</dbReference>
<dbReference type="InterPro" id="IPR036322">
    <property type="entry name" value="WD40_repeat_dom_sf"/>
</dbReference>
<dbReference type="InterPro" id="IPR001680">
    <property type="entry name" value="WD40_rpt"/>
</dbReference>
<dbReference type="PANTHER" id="PTHR19879">
    <property type="entry name" value="TRANSCRIPTION INITIATION FACTOR TFIID"/>
    <property type="match status" value="1"/>
</dbReference>
<dbReference type="PANTHER" id="PTHR19879:SF9">
    <property type="entry name" value="TRANSCRIPTION INITIATION FACTOR TFIID SUBUNIT 5"/>
    <property type="match status" value="1"/>
</dbReference>
<dbReference type="Pfam" id="PF00400">
    <property type="entry name" value="WD40"/>
    <property type="match status" value="8"/>
</dbReference>
<dbReference type="PRINTS" id="PR00320">
    <property type="entry name" value="GPROTEINBRPT"/>
</dbReference>
<dbReference type="SMART" id="SM00320">
    <property type="entry name" value="WD40"/>
    <property type="match status" value="8"/>
</dbReference>
<dbReference type="SUPFAM" id="SSF50978">
    <property type="entry name" value="WD40 repeat-like"/>
    <property type="match status" value="1"/>
</dbReference>
<dbReference type="PROSITE" id="PS00678">
    <property type="entry name" value="WD_REPEATS_1"/>
    <property type="match status" value="3"/>
</dbReference>
<dbReference type="PROSITE" id="PS50082">
    <property type="entry name" value="WD_REPEATS_2"/>
    <property type="match status" value="8"/>
</dbReference>
<dbReference type="PROSITE" id="PS50294">
    <property type="entry name" value="WD_REPEATS_REGION"/>
    <property type="match status" value="1"/>
</dbReference>
<evidence type="ECO:0000250" key="1">
    <source>
        <dbReference type="UniProtKB" id="Q3Y8L7"/>
    </source>
</evidence>
<evidence type="ECO:0000269" key="2">
    <source>
    </source>
</evidence>
<evidence type="ECO:0000269" key="3">
    <source>
    </source>
</evidence>
<evidence type="ECO:0000269" key="4">
    <source>
    </source>
</evidence>
<evidence type="ECO:0000305" key="5"/>
<feature type="chain" id="PRO_0000242657" description="Dynein assembly factor with WD repeat domains 1">
    <location>
        <begin position="1"/>
        <end position="415"/>
    </location>
</feature>
<feature type="repeat" description="WD 1">
    <location>
        <begin position="90"/>
        <end position="129"/>
    </location>
</feature>
<feature type="repeat" description="WD 2">
    <location>
        <begin position="132"/>
        <end position="172"/>
    </location>
</feature>
<feature type="repeat" description="WD 3">
    <location>
        <begin position="175"/>
        <end position="214"/>
    </location>
</feature>
<feature type="repeat" description="WD 4">
    <location>
        <begin position="217"/>
        <end position="256"/>
    </location>
</feature>
<feature type="repeat" description="WD 5">
    <location>
        <begin position="259"/>
        <end position="298"/>
    </location>
</feature>
<feature type="repeat" description="WD 6">
    <location>
        <begin position="301"/>
        <end position="340"/>
    </location>
</feature>
<feature type="repeat" description="WD 7">
    <location>
        <begin position="343"/>
        <end position="384"/>
    </location>
</feature>
<feature type="repeat" description="WD 8">
    <location>
        <begin position="385"/>
        <end position="415"/>
    </location>
</feature>
<feature type="mutagenesis site" description="Mutant adults are viable and fertile, most show no obvious phenotypes. 20% exhibit spinal curves in dorsal-ventral and medio-lateral directions. Cilia show markedly reduced motility during early development, motility subsequently increase to attain close to wild-type levels. Delayed motility onset leads to differential effects on early and late cilia-dependent processes like abnormal body axis curves, self-corrected when motility later reaches wild-type levels. Larva mutants survey and correct body shape abnormalities." evidence="3 4">
    <location>
        <begin position="140"/>
        <end position="141"/>
    </location>
</feature>
<feature type="sequence conflict" description="In Ref. 2; AAI24404." evidence="5" ref="2">
    <original>R</original>
    <variation>H</variation>
    <location>
        <position position="261"/>
    </location>
</feature>
<accession>Q1LV15</accession>
<accession>Q05AK4</accession>
<accession>Q05AM0</accession>
<comment type="function">
    <text evidence="2 3">Required for axonemal dynein assembly and ciliary motility in ciliated organs, including Kupffer's vesicle, during embryogenesis. Facilitates the onset of robust cilia motility during development (PubMed:35708608).</text>
</comment>
<comment type="subcellular location">
    <subcellularLocation>
        <location evidence="1">Cytoplasm</location>
        <location evidence="1">Cytoskeleton</location>
        <location evidence="1">Flagellum basal body</location>
    </subcellularLocation>
    <subcellularLocation>
        <location evidence="1">Cytoplasm</location>
        <location evidence="1">Cytoskeleton</location>
        <location evidence="1">Flagellum axoneme</location>
    </subcellularLocation>
    <text evidence="1">Expression is concentrated at the flagellum basal body but is also detected along the length of the flagellum.</text>
</comment>
<comment type="tissue specificity">
    <text>Expressed in organs bearing motile cilia, including the pronephros, otic vesicles and Kupffer's vesicle.</text>
</comment>
<comment type="developmental stage">
    <text>Detected at several stages during embryogenesis, but only within organs bearing motile cilia.</text>
</comment>
<comment type="disruption phenotype">
    <text evidence="2">Defects are the cause of a phenotype related to primary ciliary dyskinesia (PCD). Embryos have curly tails, pronephric cysts and left-right asymmetry defects.</text>
</comment>
<comment type="similarity">
    <text evidence="5">Belongs to the WD repeat WDR69 family.</text>
</comment>
<comment type="sequence caution" evidence="5">
    <conflict type="erroneous gene model prediction">
        <sequence resource="EMBL-CDS" id="CAK05479"/>
    </conflict>
</comment>
<organism>
    <name type="scientific">Danio rerio</name>
    <name type="common">Zebrafish</name>
    <name type="synonym">Brachydanio rerio</name>
    <dbReference type="NCBI Taxonomy" id="7955"/>
    <lineage>
        <taxon>Eukaryota</taxon>
        <taxon>Metazoa</taxon>
        <taxon>Chordata</taxon>
        <taxon>Craniata</taxon>
        <taxon>Vertebrata</taxon>
        <taxon>Euteleostomi</taxon>
        <taxon>Actinopterygii</taxon>
        <taxon>Neopterygii</taxon>
        <taxon>Teleostei</taxon>
        <taxon>Ostariophysi</taxon>
        <taxon>Cypriniformes</taxon>
        <taxon>Danionidae</taxon>
        <taxon>Danioninae</taxon>
        <taxon>Danio</taxon>
    </lineage>
</organism>
<keyword id="KW-0966">Cell projection</keyword>
<keyword id="KW-0969">Cilium</keyword>
<keyword id="KW-0963">Cytoplasm</keyword>
<keyword id="KW-0206">Cytoskeleton</keyword>
<keyword id="KW-0282">Flagellum</keyword>
<keyword id="KW-1185">Reference proteome</keyword>
<keyword id="KW-0677">Repeat</keyword>
<keyword id="KW-0853">WD repeat</keyword>
<reference key="1">
    <citation type="journal article" date="2013" name="Nature">
        <title>The zebrafish reference genome sequence and its relationship to the human genome.</title>
        <authorList>
            <person name="Howe K."/>
            <person name="Clark M.D."/>
            <person name="Torroja C.F."/>
            <person name="Torrance J."/>
            <person name="Berthelot C."/>
            <person name="Muffato M."/>
            <person name="Collins J.E."/>
            <person name="Humphray S."/>
            <person name="McLaren K."/>
            <person name="Matthews L."/>
            <person name="McLaren S."/>
            <person name="Sealy I."/>
            <person name="Caccamo M."/>
            <person name="Churcher C."/>
            <person name="Scott C."/>
            <person name="Barrett J.C."/>
            <person name="Koch R."/>
            <person name="Rauch G.J."/>
            <person name="White S."/>
            <person name="Chow W."/>
            <person name="Kilian B."/>
            <person name="Quintais L.T."/>
            <person name="Guerra-Assuncao J.A."/>
            <person name="Zhou Y."/>
            <person name="Gu Y."/>
            <person name="Yen J."/>
            <person name="Vogel J.H."/>
            <person name="Eyre T."/>
            <person name="Redmond S."/>
            <person name="Banerjee R."/>
            <person name="Chi J."/>
            <person name="Fu B."/>
            <person name="Langley E."/>
            <person name="Maguire S.F."/>
            <person name="Laird G.K."/>
            <person name="Lloyd D."/>
            <person name="Kenyon E."/>
            <person name="Donaldson S."/>
            <person name="Sehra H."/>
            <person name="Almeida-King J."/>
            <person name="Loveland J."/>
            <person name="Trevanion S."/>
            <person name="Jones M."/>
            <person name="Quail M."/>
            <person name="Willey D."/>
            <person name="Hunt A."/>
            <person name="Burton J."/>
            <person name="Sims S."/>
            <person name="McLay K."/>
            <person name="Plumb B."/>
            <person name="Davis J."/>
            <person name="Clee C."/>
            <person name="Oliver K."/>
            <person name="Clark R."/>
            <person name="Riddle C."/>
            <person name="Elliot D."/>
            <person name="Threadgold G."/>
            <person name="Harden G."/>
            <person name="Ware D."/>
            <person name="Begum S."/>
            <person name="Mortimore B."/>
            <person name="Kerry G."/>
            <person name="Heath P."/>
            <person name="Phillimore B."/>
            <person name="Tracey A."/>
            <person name="Corby N."/>
            <person name="Dunn M."/>
            <person name="Johnson C."/>
            <person name="Wood J."/>
            <person name="Clark S."/>
            <person name="Pelan S."/>
            <person name="Griffiths G."/>
            <person name="Smith M."/>
            <person name="Glithero R."/>
            <person name="Howden P."/>
            <person name="Barker N."/>
            <person name="Lloyd C."/>
            <person name="Stevens C."/>
            <person name="Harley J."/>
            <person name="Holt K."/>
            <person name="Panagiotidis G."/>
            <person name="Lovell J."/>
            <person name="Beasley H."/>
            <person name="Henderson C."/>
            <person name="Gordon D."/>
            <person name="Auger K."/>
            <person name="Wright D."/>
            <person name="Collins J."/>
            <person name="Raisen C."/>
            <person name="Dyer L."/>
            <person name="Leung K."/>
            <person name="Robertson L."/>
            <person name="Ambridge K."/>
            <person name="Leongamornlert D."/>
            <person name="McGuire S."/>
            <person name="Gilderthorp R."/>
            <person name="Griffiths C."/>
            <person name="Manthravadi D."/>
            <person name="Nichol S."/>
            <person name="Barker G."/>
            <person name="Whitehead S."/>
            <person name="Kay M."/>
            <person name="Brown J."/>
            <person name="Murnane C."/>
            <person name="Gray E."/>
            <person name="Humphries M."/>
            <person name="Sycamore N."/>
            <person name="Barker D."/>
            <person name="Saunders D."/>
            <person name="Wallis J."/>
            <person name="Babbage A."/>
            <person name="Hammond S."/>
            <person name="Mashreghi-Mohammadi M."/>
            <person name="Barr L."/>
            <person name="Martin S."/>
            <person name="Wray P."/>
            <person name="Ellington A."/>
            <person name="Matthews N."/>
            <person name="Ellwood M."/>
            <person name="Woodmansey R."/>
            <person name="Clark G."/>
            <person name="Cooper J."/>
            <person name="Tromans A."/>
            <person name="Grafham D."/>
            <person name="Skuce C."/>
            <person name="Pandian R."/>
            <person name="Andrews R."/>
            <person name="Harrison E."/>
            <person name="Kimberley A."/>
            <person name="Garnett J."/>
            <person name="Fosker N."/>
            <person name="Hall R."/>
            <person name="Garner P."/>
            <person name="Kelly D."/>
            <person name="Bird C."/>
            <person name="Palmer S."/>
            <person name="Gehring I."/>
            <person name="Berger A."/>
            <person name="Dooley C.M."/>
            <person name="Ersan-Urun Z."/>
            <person name="Eser C."/>
            <person name="Geiger H."/>
            <person name="Geisler M."/>
            <person name="Karotki L."/>
            <person name="Kirn A."/>
            <person name="Konantz J."/>
            <person name="Konantz M."/>
            <person name="Oberlander M."/>
            <person name="Rudolph-Geiger S."/>
            <person name="Teucke M."/>
            <person name="Lanz C."/>
            <person name="Raddatz G."/>
            <person name="Osoegawa K."/>
            <person name="Zhu B."/>
            <person name="Rapp A."/>
            <person name="Widaa S."/>
            <person name="Langford C."/>
            <person name="Yang F."/>
            <person name="Schuster S.C."/>
            <person name="Carter N.P."/>
            <person name="Harrow J."/>
            <person name="Ning Z."/>
            <person name="Herrero J."/>
            <person name="Searle S.M."/>
            <person name="Enright A."/>
            <person name="Geisler R."/>
            <person name="Plasterk R.H."/>
            <person name="Lee C."/>
            <person name="Westerfield M."/>
            <person name="de Jong P.J."/>
            <person name="Zon L.I."/>
            <person name="Postlethwait J.H."/>
            <person name="Nusslein-Volhard C."/>
            <person name="Hubbard T.J."/>
            <person name="Roest Crollius H."/>
            <person name="Rogers J."/>
            <person name="Stemple D.L."/>
        </authorList>
    </citation>
    <scope>NUCLEOTIDE SEQUENCE [LARGE SCALE GENOMIC DNA]</scope>
    <source>
        <strain>Tuebingen</strain>
    </source>
</reference>
<reference key="2">
    <citation type="submission" date="2006-09" db="EMBL/GenBank/DDBJ databases">
        <authorList>
            <consortium name="NIH - Zebrafish Gene Collection (ZGC) project"/>
        </authorList>
    </citation>
    <scope>NUCLEOTIDE SEQUENCE [LARGE SCALE MRNA]</scope>
    <source>
        <tissue>Olfactory epithelium</tissue>
        <tissue>Testis</tissue>
    </source>
</reference>
<reference key="3">
    <citation type="journal article" date="2010" name="Dev. Dyn.">
        <title>Oda16/Wdr69 is essential for axonemal dynein assembly and ciliary motility during zebrafish embryogenesis.</title>
        <authorList>
            <person name="Gao C."/>
            <person name="Wang G."/>
            <person name="Amack J.D."/>
            <person name="Mitchell D.R."/>
        </authorList>
    </citation>
    <scope>FUNCTION</scope>
    <scope>DISRUPTION PHENOTYPE</scope>
</reference>
<reference key="4">
    <citation type="journal article" date="2022" name="Development">
        <title>Daw1 regulates the timely onset of cilia motility during development.</title>
        <authorList>
            <person name="Bearce E.A."/>
            <person name="Irons Z.H."/>
            <person name="Craig S.B."/>
            <person name="Kuhns C.J."/>
            <person name="Sabazali C."/>
            <person name="Farnsworth D.R."/>
            <person name="Miller A.C."/>
            <person name="Grimes D.T."/>
        </authorList>
    </citation>
    <scope>FUNCTION</scope>
    <scope>MUTAGENESIS OF 140-ILE-ALA-141</scope>
</reference>
<reference key="5">
    <citation type="journal article" date="2022" name="Genet. Med.">
        <title>Biallelic DAW1 variants cause a motile ciliopathy characterized by laterality defects and subtle ciliary beating abnormalities.</title>
        <authorList>
            <person name="Leslie J.S."/>
            <person name="Hjeij R."/>
            <person name="Vivante A."/>
            <person name="Bearce E.A."/>
            <person name="Dyer L."/>
            <person name="Wang J."/>
            <person name="Rawlins L."/>
            <person name="Kennedy J."/>
            <person name="Ubeyratna N."/>
            <person name="Fasham J."/>
            <person name="Irons Z.H."/>
            <person name="Craig S.B."/>
            <person name="Koenig J."/>
            <person name="George S."/>
            <person name="Pode-Shakked B."/>
            <person name="Bolkier Y."/>
            <person name="Barel O."/>
            <person name="Mane S."/>
            <person name="Frederiksen K.K."/>
            <person name="Wenger O."/>
            <person name="Scott E."/>
            <person name="Cross H.E."/>
            <person name="Lorentzen E."/>
            <person name="Norris D.P."/>
            <person name="Anikster Y."/>
            <person name="Omran H."/>
            <person name="Grimes D.T."/>
            <person name="Crosby A.H."/>
            <person name="Baple E.L."/>
        </authorList>
    </citation>
    <scope>FUNCTION</scope>
    <scope>MUTAGENESIS OF 140-ILE-ALA-141</scope>
</reference>
<proteinExistence type="evidence at protein level"/>